<comment type="subcellular location">
    <subcellularLocation>
        <location evidence="1">Cytoplasm</location>
    </subcellularLocation>
</comment>
<comment type="similarity">
    <text evidence="1">Belongs to the TACO1 family.</text>
</comment>
<name>Y4926_HAHCH</name>
<gene>
    <name type="ordered locus">HCH_04926</name>
</gene>
<proteinExistence type="inferred from homology"/>
<sequence>MAGHSKWANIKHRKASQDAKRGKIFTKLIREITVAAKNGALPEDNPRLRAVIDKALTVNMKKDTIEKAIQRGAGGGDDSNFDELTYEGYGPGGVAVYVEVMTDNRNRTVAEVRHAFSKHGGNLGTDGSVAYLFSKTGVILFAPDVDEDAVMEAALEAGAQDVIANDDGSVEVQTSAEDFMAVKDALMAAGLTPESADVSMVPATMAPLDVENGEKVMKLIEMLEDLDDVQNVYSNADIPDEVLESMGG</sequence>
<organism>
    <name type="scientific">Hahella chejuensis (strain KCTC 2396)</name>
    <dbReference type="NCBI Taxonomy" id="349521"/>
    <lineage>
        <taxon>Bacteria</taxon>
        <taxon>Pseudomonadati</taxon>
        <taxon>Pseudomonadota</taxon>
        <taxon>Gammaproteobacteria</taxon>
        <taxon>Oceanospirillales</taxon>
        <taxon>Hahellaceae</taxon>
        <taxon>Hahella</taxon>
    </lineage>
</organism>
<accession>Q2SCK9</accession>
<protein>
    <recommendedName>
        <fullName evidence="1">Probable transcriptional regulatory protein HCH_04926</fullName>
    </recommendedName>
</protein>
<evidence type="ECO:0000255" key="1">
    <source>
        <dbReference type="HAMAP-Rule" id="MF_00693"/>
    </source>
</evidence>
<dbReference type="EMBL" id="CP000155">
    <property type="protein sequence ID" value="ABC31615.1"/>
    <property type="molecule type" value="Genomic_DNA"/>
</dbReference>
<dbReference type="RefSeq" id="WP_011398680.1">
    <property type="nucleotide sequence ID" value="NC_007645.1"/>
</dbReference>
<dbReference type="SMR" id="Q2SCK9"/>
<dbReference type="STRING" id="349521.HCH_04926"/>
<dbReference type="KEGG" id="hch:HCH_04926"/>
<dbReference type="eggNOG" id="COG0217">
    <property type="taxonomic scope" value="Bacteria"/>
</dbReference>
<dbReference type="HOGENOM" id="CLU_062974_2_2_6"/>
<dbReference type="OrthoDB" id="9781053at2"/>
<dbReference type="Proteomes" id="UP000000238">
    <property type="component" value="Chromosome"/>
</dbReference>
<dbReference type="GO" id="GO:0005829">
    <property type="term" value="C:cytosol"/>
    <property type="evidence" value="ECO:0007669"/>
    <property type="project" value="TreeGrafter"/>
</dbReference>
<dbReference type="GO" id="GO:0003677">
    <property type="term" value="F:DNA binding"/>
    <property type="evidence" value="ECO:0007669"/>
    <property type="project" value="UniProtKB-UniRule"/>
</dbReference>
<dbReference type="GO" id="GO:0006355">
    <property type="term" value="P:regulation of DNA-templated transcription"/>
    <property type="evidence" value="ECO:0007669"/>
    <property type="project" value="UniProtKB-UniRule"/>
</dbReference>
<dbReference type="FunFam" id="1.10.10.200:FF:000001">
    <property type="entry name" value="Probable transcriptional regulatory protein YebC"/>
    <property type="match status" value="1"/>
</dbReference>
<dbReference type="FunFam" id="3.30.70.980:FF:000002">
    <property type="entry name" value="Probable transcriptional regulatory protein YebC"/>
    <property type="match status" value="1"/>
</dbReference>
<dbReference type="Gene3D" id="1.10.10.200">
    <property type="match status" value="1"/>
</dbReference>
<dbReference type="Gene3D" id="3.30.70.980">
    <property type="match status" value="2"/>
</dbReference>
<dbReference type="HAMAP" id="MF_00693">
    <property type="entry name" value="Transcrip_reg_TACO1"/>
    <property type="match status" value="1"/>
</dbReference>
<dbReference type="InterPro" id="IPR017856">
    <property type="entry name" value="Integrase-like_N"/>
</dbReference>
<dbReference type="InterPro" id="IPR048300">
    <property type="entry name" value="TACO1_YebC-like_2nd/3rd_dom"/>
</dbReference>
<dbReference type="InterPro" id="IPR049083">
    <property type="entry name" value="TACO1_YebC_N"/>
</dbReference>
<dbReference type="InterPro" id="IPR002876">
    <property type="entry name" value="Transcrip_reg_TACO1-like"/>
</dbReference>
<dbReference type="InterPro" id="IPR026564">
    <property type="entry name" value="Transcrip_reg_TACO1-like_dom3"/>
</dbReference>
<dbReference type="InterPro" id="IPR029072">
    <property type="entry name" value="YebC-like"/>
</dbReference>
<dbReference type="NCBIfam" id="NF001030">
    <property type="entry name" value="PRK00110.1"/>
    <property type="match status" value="1"/>
</dbReference>
<dbReference type="NCBIfam" id="NF009044">
    <property type="entry name" value="PRK12378.1"/>
    <property type="match status" value="1"/>
</dbReference>
<dbReference type="NCBIfam" id="TIGR01033">
    <property type="entry name" value="YebC/PmpR family DNA-binding transcriptional regulator"/>
    <property type="match status" value="1"/>
</dbReference>
<dbReference type="PANTHER" id="PTHR12532:SF6">
    <property type="entry name" value="TRANSCRIPTIONAL REGULATORY PROTEIN YEBC-RELATED"/>
    <property type="match status" value="1"/>
</dbReference>
<dbReference type="PANTHER" id="PTHR12532">
    <property type="entry name" value="TRANSLATIONAL ACTIVATOR OF CYTOCHROME C OXIDASE 1"/>
    <property type="match status" value="1"/>
</dbReference>
<dbReference type="Pfam" id="PF20772">
    <property type="entry name" value="TACO1_YebC_N"/>
    <property type="match status" value="1"/>
</dbReference>
<dbReference type="Pfam" id="PF01709">
    <property type="entry name" value="Transcrip_reg"/>
    <property type="match status" value="1"/>
</dbReference>
<dbReference type="SUPFAM" id="SSF75625">
    <property type="entry name" value="YebC-like"/>
    <property type="match status" value="1"/>
</dbReference>
<reference key="1">
    <citation type="journal article" date="2005" name="Nucleic Acids Res.">
        <title>Genomic blueprint of Hahella chejuensis, a marine microbe producing an algicidal agent.</title>
        <authorList>
            <person name="Jeong H."/>
            <person name="Yim J.H."/>
            <person name="Lee C."/>
            <person name="Choi S.-H."/>
            <person name="Park Y.K."/>
            <person name="Yoon S.H."/>
            <person name="Hur C.-G."/>
            <person name="Kang H.-Y."/>
            <person name="Kim D."/>
            <person name="Lee H.H."/>
            <person name="Park K.H."/>
            <person name="Park S.-H."/>
            <person name="Park H.-S."/>
            <person name="Lee H.K."/>
            <person name="Oh T.K."/>
            <person name="Kim J.F."/>
        </authorList>
    </citation>
    <scope>NUCLEOTIDE SEQUENCE [LARGE SCALE GENOMIC DNA]</scope>
    <source>
        <strain>KCTC 2396</strain>
    </source>
</reference>
<feature type="chain" id="PRO_0000257071" description="Probable transcriptional regulatory protein HCH_04926">
    <location>
        <begin position="1"/>
        <end position="248"/>
    </location>
</feature>
<keyword id="KW-0963">Cytoplasm</keyword>
<keyword id="KW-0238">DNA-binding</keyword>
<keyword id="KW-1185">Reference proteome</keyword>
<keyword id="KW-0804">Transcription</keyword>
<keyword id="KW-0805">Transcription regulation</keyword>